<feature type="chain" id="PRO_0000101941" description="UDP-N-acetylmuramoyl-L-alanyl-D-glutamate--L-lysine ligase">
    <location>
        <begin position="1"/>
        <end position="494"/>
    </location>
</feature>
<feature type="short sequence motif" description="L-lysine recognition motif">
    <location>
        <begin position="406"/>
        <end position="409"/>
    </location>
</feature>
<feature type="binding site" evidence="1">
    <location>
        <position position="30"/>
    </location>
    <ligand>
        <name>UDP-N-acetyl-alpha-D-muramoyl-L-alanyl-D-glutamate</name>
        <dbReference type="ChEBI" id="CHEBI:83900"/>
    </ligand>
</feature>
<feature type="binding site" evidence="1">
    <location>
        <begin position="110"/>
        <end position="116"/>
    </location>
    <ligand>
        <name>ATP</name>
        <dbReference type="ChEBI" id="CHEBI:30616"/>
    </ligand>
</feature>
<feature type="binding site" evidence="1">
    <location>
        <begin position="152"/>
        <end position="153"/>
    </location>
    <ligand>
        <name>UDP-N-acetyl-alpha-D-muramoyl-L-alanyl-D-glutamate</name>
        <dbReference type="ChEBI" id="CHEBI:83900"/>
    </ligand>
</feature>
<feature type="binding site" evidence="1">
    <location>
        <position position="179"/>
    </location>
    <ligand>
        <name>UDP-N-acetyl-alpha-D-muramoyl-L-alanyl-D-glutamate</name>
        <dbReference type="ChEBI" id="CHEBI:83900"/>
    </ligand>
</feature>
<feature type="binding site" evidence="1">
    <location>
        <position position="187"/>
    </location>
    <ligand>
        <name>UDP-N-acetyl-alpha-D-muramoyl-L-alanyl-D-glutamate</name>
        <dbReference type="ChEBI" id="CHEBI:83900"/>
    </ligand>
</feature>
<feature type="modified residue" description="N6-carboxylysine" evidence="1">
    <location>
        <position position="219"/>
    </location>
</feature>
<sequence>MDASTLFKKVKVKRVLGSLEQQIDDITTDSRTAREGSIFVASVGYTVDSHKFCQNVADQGCKLVVVNKEQSLPANVTQVVVPDTLRVASILAHTLYDYPSHQLVTFGVTGTNGKTSIATMIHLIQRKLQKNSAYLGTNGFQINETKTKGANTTPETVSLTKKIKEAVDAGAESMTLEVSSHGLVLGRLRGVEFDVAIFSNLTQDHLDFHGTMEAYGHAKSLLFSQLGEDLSKEKYVVLNNDDSFSEYLRTVTPYEVFSYGIDEEAQFMAKNIQESLQGVSFDFVTPFGTYPVKSPYVGKFNISNIMAAMIAVWSKGTSLETIIKAVENLEPVEGRLEVLDPSLPIDLIIDYAHTADGMNKLIDAVQPFVKQKLIFLVGMAGERDLTKTPEMGRVACRADYVIFTPDNPANDDPKMLTAELAKGATHQNYIEFDDRAEGIKHAIDIAEPGDTVVLASKGREPYQIMPGHIKVPHRDDLIGLEAAYKKFGGGPVDQ</sequence>
<reference key="1">
    <citation type="journal article" date="2001" name="Lancet">
        <title>Whole genome sequencing of meticillin-resistant Staphylococcus aureus.</title>
        <authorList>
            <person name="Kuroda M."/>
            <person name="Ohta T."/>
            <person name="Uchiyama I."/>
            <person name="Baba T."/>
            <person name="Yuzawa H."/>
            <person name="Kobayashi I."/>
            <person name="Cui L."/>
            <person name="Oguchi A."/>
            <person name="Aoki K."/>
            <person name="Nagai Y."/>
            <person name="Lian J.-Q."/>
            <person name="Ito T."/>
            <person name="Kanamori M."/>
            <person name="Matsumaru H."/>
            <person name="Maruyama A."/>
            <person name="Murakami H."/>
            <person name="Hosoyama A."/>
            <person name="Mizutani-Ui Y."/>
            <person name="Takahashi N.K."/>
            <person name="Sawano T."/>
            <person name="Inoue R."/>
            <person name="Kaito C."/>
            <person name="Sekimizu K."/>
            <person name="Hirakawa H."/>
            <person name="Kuhara S."/>
            <person name="Goto S."/>
            <person name="Yabuzaki J."/>
            <person name="Kanehisa M."/>
            <person name="Yamashita A."/>
            <person name="Oshima K."/>
            <person name="Furuya K."/>
            <person name="Yoshino C."/>
            <person name="Shiba T."/>
            <person name="Hattori M."/>
            <person name="Ogasawara N."/>
            <person name="Hayashi H."/>
            <person name="Hiramatsu K."/>
        </authorList>
    </citation>
    <scope>NUCLEOTIDE SEQUENCE [LARGE SCALE GENOMIC DNA]</scope>
    <source>
        <strain>Mu50 / ATCC 700699</strain>
    </source>
</reference>
<organism>
    <name type="scientific">Staphylococcus aureus (strain Mu50 / ATCC 700699)</name>
    <dbReference type="NCBI Taxonomy" id="158878"/>
    <lineage>
        <taxon>Bacteria</taxon>
        <taxon>Bacillati</taxon>
        <taxon>Bacillota</taxon>
        <taxon>Bacilli</taxon>
        <taxon>Bacillales</taxon>
        <taxon>Staphylococcaceae</taxon>
        <taxon>Staphylococcus</taxon>
    </lineage>
</organism>
<protein>
    <recommendedName>
        <fullName evidence="1">UDP-N-acetylmuramoyl-L-alanyl-D-glutamate--L-lysine ligase</fullName>
        <ecNumber evidence="1">6.3.2.7</ecNumber>
    </recommendedName>
    <alternativeName>
        <fullName evidence="1">L-lysine-adding enzyme</fullName>
    </alternativeName>
    <alternativeName>
        <fullName evidence="1">UDP-MurNAc-L-Ala-D-Glu:L-Lys ligase</fullName>
    </alternativeName>
    <alternativeName>
        <fullName evidence="1">UDP-MurNAc-tripeptide synthetase</fullName>
    </alternativeName>
    <alternativeName>
        <fullName evidence="1">UDP-N-acetylmuramyl-tripeptide synthetase</fullName>
    </alternativeName>
</protein>
<accession>P65479</accession>
<accession>Q99V74</accession>
<dbReference type="EC" id="6.3.2.7" evidence="1"/>
<dbReference type="EMBL" id="BA000017">
    <property type="protein sequence ID" value="BAB57180.1"/>
    <property type="molecule type" value="Genomic_DNA"/>
</dbReference>
<dbReference type="RefSeq" id="WP_000340119.1">
    <property type="nucleotide sequence ID" value="NC_002758.2"/>
</dbReference>
<dbReference type="SMR" id="P65479"/>
<dbReference type="KEGG" id="sav:SAV1018"/>
<dbReference type="HOGENOM" id="CLU_022291_0_1_9"/>
<dbReference type="PhylomeDB" id="P65479"/>
<dbReference type="UniPathway" id="UPA00219"/>
<dbReference type="Proteomes" id="UP000002481">
    <property type="component" value="Chromosome"/>
</dbReference>
<dbReference type="GO" id="GO:0005737">
    <property type="term" value="C:cytoplasm"/>
    <property type="evidence" value="ECO:0007669"/>
    <property type="project" value="UniProtKB-SubCell"/>
</dbReference>
<dbReference type="GO" id="GO:0005524">
    <property type="term" value="F:ATP binding"/>
    <property type="evidence" value="ECO:0007669"/>
    <property type="project" value="UniProtKB-UniRule"/>
</dbReference>
<dbReference type="GO" id="GO:0000287">
    <property type="term" value="F:magnesium ion binding"/>
    <property type="evidence" value="ECO:0007669"/>
    <property type="project" value="UniProtKB-UniRule"/>
</dbReference>
<dbReference type="GO" id="GO:0047482">
    <property type="term" value="F:UDP-N-acetylmuramoyl-L-alanyl-D-glutamate-L-lysine ligase activity"/>
    <property type="evidence" value="ECO:0007669"/>
    <property type="project" value="UniProtKB-UniRule"/>
</dbReference>
<dbReference type="GO" id="GO:0051301">
    <property type="term" value="P:cell division"/>
    <property type="evidence" value="ECO:0007669"/>
    <property type="project" value="UniProtKB-KW"/>
</dbReference>
<dbReference type="GO" id="GO:0071555">
    <property type="term" value="P:cell wall organization"/>
    <property type="evidence" value="ECO:0007669"/>
    <property type="project" value="UniProtKB-KW"/>
</dbReference>
<dbReference type="GO" id="GO:0009252">
    <property type="term" value="P:peptidoglycan biosynthetic process"/>
    <property type="evidence" value="ECO:0007669"/>
    <property type="project" value="UniProtKB-UniRule"/>
</dbReference>
<dbReference type="GO" id="GO:0008360">
    <property type="term" value="P:regulation of cell shape"/>
    <property type="evidence" value="ECO:0007669"/>
    <property type="project" value="UniProtKB-KW"/>
</dbReference>
<dbReference type="Gene3D" id="3.90.190.20">
    <property type="entry name" value="Mur ligase, C-terminal domain"/>
    <property type="match status" value="1"/>
</dbReference>
<dbReference type="Gene3D" id="3.40.1190.10">
    <property type="entry name" value="Mur-like, catalytic domain"/>
    <property type="match status" value="1"/>
</dbReference>
<dbReference type="Gene3D" id="3.40.1390.10">
    <property type="entry name" value="MurE/MurF, N-terminal domain"/>
    <property type="match status" value="1"/>
</dbReference>
<dbReference type="HAMAP" id="MF_00208">
    <property type="entry name" value="MurE"/>
    <property type="match status" value="1"/>
</dbReference>
<dbReference type="InterPro" id="IPR036565">
    <property type="entry name" value="Mur-like_cat_sf"/>
</dbReference>
<dbReference type="InterPro" id="IPR004101">
    <property type="entry name" value="Mur_ligase_C"/>
</dbReference>
<dbReference type="InterPro" id="IPR036615">
    <property type="entry name" value="Mur_ligase_C_dom_sf"/>
</dbReference>
<dbReference type="InterPro" id="IPR013221">
    <property type="entry name" value="Mur_ligase_cen"/>
</dbReference>
<dbReference type="InterPro" id="IPR035911">
    <property type="entry name" value="MurE/MurF_N"/>
</dbReference>
<dbReference type="InterPro" id="IPR005761">
    <property type="entry name" value="UDP-N-AcMur-Glu-dNH2Pim_ligase"/>
</dbReference>
<dbReference type="NCBIfam" id="TIGR01085">
    <property type="entry name" value="murE"/>
    <property type="match status" value="1"/>
</dbReference>
<dbReference type="NCBIfam" id="NF001126">
    <property type="entry name" value="PRK00139.1-4"/>
    <property type="match status" value="1"/>
</dbReference>
<dbReference type="NCBIfam" id="NF010628">
    <property type="entry name" value="PRK14022.1"/>
    <property type="match status" value="1"/>
</dbReference>
<dbReference type="PANTHER" id="PTHR23135">
    <property type="entry name" value="MUR LIGASE FAMILY MEMBER"/>
    <property type="match status" value="1"/>
</dbReference>
<dbReference type="PANTHER" id="PTHR23135:SF4">
    <property type="entry name" value="UDP-N-ACETYLMURAMOYL-L-ALANYL-D-GLUTAMATE--2,6-DIAMINOPIMELATE LIGASE MURE HOMOLOG, CHLOROPLASTIC"/>
    <property type="match status" value="1"/>
</dbReference>
<dbReference type="Pfam" id="PF02875">
    <property type="entry name" value="Mur_ligase_C"/>
    <property type="match status" value="1"/>
</dbReference>
<dbReference type="Pfam" id="PF08245">
    <property type="entry name" value="Mur_ligase_M"/>
    <property type="match status" value="1"/>
</dbReference>
<dbReference type="SUPFAM" id="SSF53623">
    <property type="entry name" value="MurD-like peptide ligases, catalytic domain"/>
    <property type="match status" value="1"/>
</dbReference>
<dbReference type="SUPFAM" id="SSF53244">
    <property type="entry name" value="MurD-like peptide ligases, peptide-binding domain"/>
    <property type="match status" value="1"/>
</dbReference>
<dbReference type="SUPFAM" id="SSF63418">
    <property type="entry name" value="MurE/MurF N-terminal domain"/>
    <property type="match status" value="1"/>
</dbReference>
<comment type="function">
    <text evidence="1">Catalyzes the addition of L-lysine to the nucleotide precursor UDP-N-acetylmuramoyl-L-alanyl-D-glutamate (UMAG) in the biosynthesis of bacterial cell-wall peptidoglycan.</text>
</comment>
<comment type="catalytic activity">
    <reaction evidence="1">
        <text>UDP-N-acetyl-alpha-D-muramoyl-L-alanyl-D-glutamate + L-lysine + ATP = UDP-N-acetyl-alpha-D-muramoyl-L-alanyl-gamma-D-glutamyl-L-lysine + ADP + phosphate + H(+)</text>
        <dbReference type="Rhea" id="RHEA:17969"/>
        <dbReference type="ChEBI" id="CHEBI:15378"/>
        <dbReference type="ChEBI" id="CHEBI:30616"/>
        <dbReference type="ChEBI" id="CHEBI:32551"/>
        <dbReference type="ChEBI" id="CHEBI:43474"/>
        <dbReference type="ChEBI" id="CHEBI:83900"/>
        <dbReference type="ChEBI" id="CHEBI:83903"/>
        <dbReference type="ChEBI" id="CHEBI:456216"/>
        <dbReference type="EC" id="6.3.2.7"/>
    </reaction>
</comment>
<comment type="pathway">
    <text evidence="1">Cell wall biogenesis; peptidoglycan biosynthesis.</text>
</comment>
<comment type="subcellular location">
    <subcellularLocation>
        <location evidence="1">Cytoplasm</location>
    </subcellularLocation>
</comment>
<comment type="PTM">
    <text evidence="1">Carboxylation is probably crucial for Mg(2+) binding and, consequently, for the gamma-phosphate positioning of ATP.</text>
</comment>
<comment type="similarity">
    <text evidence="1">Belongs to the MurCDEF family. MurE subfamily.</text>
</comment>
<gene>
    <name evidence="1" type="primary">murE</name>
    <name type="ordered locus">SAV1018</name>
</gene>
<keyword id="KW-0067">ATP-binding</keyword>
<keyword id="KW-0131">Cell cycle</keyword>
<keyword id="KW-0132">Cell division</keyword>
<keyword id="KW-0133">Cell shape</keyword>
<keyword id="KW-0961">Cell wall biogenesis/degradation</keyword>
<keyword id="KW-0963">Cytoplasm</keyword>
<keyword id="KW-0436">Ligase</keyword>
<keyword id="KW-0547">Nucleotide-binding</keyword>
<keyword id="KW-0573">Peptidoglycan synthesis</keyword>
<name>MURE_STAAM</name>
<proteinExistence type="inferred from homology"/>
<evidence type="ECO:0000255" key="1">
    <source>
        <dbReference type="HAMAP-Rule" id="MF_00208"/>
    </source>
</evidence>